<accession>P0A8R8</accession>
<accession>P45525</accession>
<accession>P77177</accession>
<organism>
    <name type="scientific">Escherichia coli O6:H1 (strain CFT073 / ATCC 700928 / UPEC)</name>
    <dbReference type="NCBI Taxonomy" id="199310"/>
    <lineage>
        <taxon>Bacteria</taxon>
        <taxon>Pseudomonadati</taxon>
        <taxon>Pseudomonadota</taxon>
        <taxon>Gammaproteobacteria</taxon>
        <taxon>Enterobacterales</taxon>
        <taxon>Enterobacteriaceae</taxon>
        <taxon>Escherichia</taxon>
    </lineage>
</organism>
<comment type="subcellular location">
    <subcellularLocation>
        <location evidence="1">Cell inner membrane</location>
        <topology evidence="1">Multi-pass membrane protein</topology>
    </subcellularLocation>
</comment>
<comment type="similarity">
    <text evidence="3">Belongs to the UPF0283 family.</text>
</comment>
<evidence type="ECO:0000250" key="1"/>
<evidence type="ECO:0000255" key="2"/>
<evidence type="ECO:0000305" key="3"/>
<proteinExistence type="inferred from homology"/>
<keyword id="KW-0997">Cell inner membrane</keyword>
<keyword id="KW-1003">Cell membrane</keyword>
<keyword id="KW-0472">Membrane</keyword>
<keyword id="KW-1185">Reference proteome</keyword>
<keyword id="KW-0812">Transmembrane</keyword>
<keyword id="KW-1133">Transmembrane helix</keyword>
<feature type="chain" id="PRO_0000214173" description="UPF0283 membrane protein YcjF">
    <location>
        <begin position="1"/>
        <end position="353"/>
    </location>
</feature>
<feature type="topological domain" description="Periplasmic" evidence="2">
    <location>
        <begin position="1"/>
        <end position="69"/>
    </location>
</feature>
<feature type="transmembrane region" description="Helical" evidence="2">
    <location>
        <begin position="70"/>
        <end position="90"/>
    </location>
</feature>
<feature type="topological domain" description="Cytoplasmic" evidence="2">
    <location>
        <begin position="91"/>
        <end position="99"/>
    </location>
</feature>
<feature type="transmembrane region" description="Helical" evidence="2">
    <location>
        <begin position="100"/>
        <end position="120"/>
    </location>
</feature>
<feature type="topological domain" description="Periplasmic" evidence="2">
    <location>
        <begin position="121"/>
        <end position="212"/>
    </location>
</feature>
<feature type="transmembrane region" description="Helical" evidence="2">
    <location>
        <begin position="213"/>
        <end position="233"/>
    </location>
</feature>
<feature type="topological domain" description="Cytoplasmic" evidence="2">
    <location>
        <begin position="234"/>
        <end position="353"/>
    </location>
</feature>
<reference key="1">
    <citation type="journal article" date="2002" name="Proc. Natl. Acad. Sci. U.S.A.">
        <title>Extensive mosaic structure revealed by the complete genome sequence of uropathogenic Escherichia coli.</title>
        <authorList>
            <person name="Welch R.A."/>
            <person name="Burland V."/>
            <person name="Plunkett G. III"/>
            <person name="Redford P."/>
            <person name="Roesch P."/>
            <person name="Rasko D."/>
            <person name="Buckles E.L."/>
            <person name="Liou S.-R."/>
            <person name="Boutin A."/>
            <person name="Hackett J."/>
            <person name="Stroud D."/>
            <person name="Mayhew G.F."/>
            <person name="Rose D.J."/>
            <person name="Zhou S."/>
            <person name="Schwartz D.C."/>
            <person name="Perna N.T."/>
            <person name="Mobley H.L.T."/>
            <person name="Donnenberg M.S."/>
            <person name="Blattner F.R."/>
        </authorList>
    </citation>
    <scope>NUCLEOTIDE SEQUENCE [LARGE SCALE GENOMIC DNA]</scope>
    <source>
        <strain>CFT073 / ATCC 700928 / UPEC</strain>
    </source>
</reference>
<name>YCJF_ECOL6</name>
<sequence length="353" mass="39392">MTEPLKPRIDFDGPLEVDQNPKFRAQQTFDENQAQNFAPATLDEAQEEEGQVEAVMDAALRPKRSLWRKMVMGGLALFGASVVGQGVQWTMNAWQTQDWVALGGCAAGALIIGAGVGSVVTEWRRLWRLRQRAHERDEARDLLHSHGTGKGRAFCEKLAQQAGIDQSHPALQRWYASIHETQNDREVVSLYAHLVQPVLDAQARREISRSAAESTLMIAVSPLALVDMAFIAWRNLRLINRIATLYGIELGYYSRLRLFKLVLLNIAFAGASELVREVGMDWMSQDLAARLSTRAAQGIGAGLLTARLGIKAMELCRPLPWIDDDKPRLGDFRRQLIGQVKETLQKGKTPSEK</sequence>
<protein>
    <recommendedName>
        <fullName>UPF0283 membrane protein YcjF</fullName>
    </recommendedName>
</protein>
<gene>
    <name type="primary">ycjF</name>
    <name type="ordered locus">c1794</name>
</gene>
<dbReference type="EMBL" id="AE014075">
    <property type="protein sequence ID" value="AAN80260.1"/>
    <property type="molecule type" value="Genomic_DNA"/>
</dbReference>
<dbReference type="RefSeq" id="WP_000138728.1">
    <property type="nucleotide sequence ID" value="NZ_CP051263.1"/>
</dbReference>
<dbReference type="SMR" id="P0A8R8"/>
<dbReference type="STRING" id="199310.c1794"/>
<dbReference type="KEGG" id="ecc:c1794"/>
<dbReference type="eggNOG" id="COG3768">
    <property type="taxonomic scope" value="Bacteria"/>
</dbReference>
<dbReference type="HOGENOM" id="CLU_057693_2_0_6"/>
<dbReference type="BioCyc" id="ECOL199310:C1794-MONOMER"/>
<dbReference type="Proteomes" id="UP000001410">
    <property type="component" value="Chromosome"/>
</dbReference>
<dbReference type="GO" id="GO:0005886">
    <property type="term" value="C:plasma membrane"/>
    <property type="evidence" value="ECO:0007669"/>
    <property type="project" value="UniProtKB-SubCell"/>
</dbReference>
<dbReference type="HAMAP" id="MF_01085">
    <property type="entry name" value="UPF0283"/>
    <property type="match status" value="1"/>
</dbReference>
<dbReference type="InterPro" id="IPR021147">
    <property type="entry name" value="DUF697"/>
</dbReference>
<dbReference type="InterPro" id="IPR006507">
    <property type="entry name" value="UPF0283"/>
</dbReference>
<dbReference type="NCBIfam" id="TIGR01620">
    <property type="entry name" value="hyp_HI0043"/>
    <property type="match status" value="1"/>
</dbReference>
<dbReference type="PANTHER" id="PTHR39342">
    <property type="entry name" value="UPF0283 MEMBRANE PROTEIN YCJF"/>
    <property type="match status" value="1"/>
</dbReference>
<dbReference type="PANTHER" id="PTHR39342:SF1">
    <property type="entry name" value="UPF0283 MEMBRANE PROTEIN YCJF"/>
    <property type="match status" value="1"/>
</dbReference>
<dbReference type="Pfam" id="PF05128">
    <property type="entry name" value="DUF697"/>
    <property type="match status" value="1"/>
</dbReference>